<name>O16A_CONMA</name>
<feature type="signal peptide" evidence="2">
    <location>
        <begin position="1"/>
        <end position="22"/>
    </location>
</feature>
<feature type="propeptide" id="PRO_0000392700" evidence="1">
    <location>
        <begin position="23"/>
        <end position="49"/>
    </location>
</feature>
<feature type="peptide" id="PRO_0000044869" description="Delta-conotoxin-like MVIA">
    <location>
        <begin position="52"/>
        <end position="83"/>
    </location>
</feature>
<feature type="modified residue" description="4-hydroxyproline" evidence="1">
    <location>
        <position position="65"/>
    </location>
</feature>
<feature type="modified residue" description="Serine amide" evidence="1">
    <location>
        <position position="83"/>
    </location>
</feature>
<feature type="disulfide bond" evidence="1">
    <location>
        <begin position="54"/>
        <end position="69"/>
    </location>
</feature>
<feature type="disulfide bond" evidence="1">
    <location>
        <begin position="61"/>
        <end position="73"/>
    </location>
</feature>
<feature type="disulfide bond" evidence="1">
    <location>
        <begin position="68"/>
        <end position="77"/>
    </location>
</feature>
<organism>
    <name type="scientific">Conus magus</name>
    <name type="common">Magical cone</name>
    <dbReference type="NCBI Taxonomy" id="6492"/>
    <lineage>
        <taxon>Eukaryota</taxon>
        <taxon>Metazoa</taxon>
        <taxon>Spiralia</taxon>
        <taxon>Lophotrochozoa</taxon>
        <taxon>Mollusca</taxon>
        <taxon>Gastropoda</taxon>
        <taxon>Caenogastropoda</taxon>
        <taxon>Neogastropoda</taxon>
        <taxon>Conoidea</taxon>
        <taxon>Conidae</taxon>
        <taxon>Conus</taxon>
        <taxon>Pionoconus</taxon>
    </lineage>
</organism>
<reference key="1">
    <citation type="patent" date="2003-11-11" number="JP2003533178">
        <title>O-superfamily conotoxin peptides.</title>
        <authorList>
            <person name="Hillyard D.R."/>
            <person name="Mcintosh M.J."/>
            <person name="Jones R.M."/>
            <person name="Cartier E.G."/>
            <person name="Watkins M."/>
            <person name="Olivera B.M."/>
            <person name="Layer R.T."/>
        </authorList>
    </citation>
    <scope>NUCLEOTIDE SEQUENCE</scope>
</reference>
<reference key="2">
    <citation type="journal article" date="2001" name="Biochemistry">
        <title>Delta-conotoxin structure/function through a cladistic analysis.</title>
        <authorList>
            <person name="Bulaj G."/>
            <person name="DeLaCruz R."/>
            <person name="Azimi-Zonooz A."/>
            <person name="West P."/>
            <person name="Watkins M."/>
            <person name="Yoshikami D."/>
            <person name="Olivera B.M."/>
        </authorList>
    </citation>
    <scope>NUCLEOTIDE SEQUENCE [MRNA]</scope>
    <source>
        <tissue>Venom duct</tissue>
    </source>
</reference>
<sequence length="84" mass="9483">MKLTCVMIVAVLFLTTWTFVTADDSRYGLKNLFPKARHEMKNPEASKLNKRDGCYNAGTFCGIRPGLCCSEFCFLWCITFVDSG</sequence>
<protein>
    <recommendedName>
        <fullName>Delta-conotoxin-like MVIA</fullName>
        <shortName>Delta-MVIA</shortName>
    </recommendedName>
</protein>
<keyword id="KW-0027">Amidation</keyword>
<keyword id="KW-0165">Cleavage on pair of basic residues</keyword>
<keyword id="KW-1015">Disulfide bond</keyword>
<keyword id="KW-0379">Hydroxylation</keyword>
<keyword id="KW-0872">Ion channel impairing toxin</keyword>
<keyword id="KW-0960">Knottin</keyword>
<keyword id="KW-0528">Neurotoxin</keyword>
<keyword id="KW-0638">Presynaptic neurotoxin</keyword>
<keyword id="KW-0964">Secreted</keyword>
<keyword id="KW-0732">Signal</keyword>
<keyword id="KW-0800">Toxin</keyword>
<keyword id="KW-0738">Voltage-gated sodium channel impairing toxin</keyword>
<evidence type="ECO:0000250" key="1"/>
<evidence type="ECO:0000255" key="2"/>
<evidence type="ECO:0000305" key="3"/>
<accession>P69753</accession>
<proteinExistence type="evidence at transcript level"/>
<comment type="function">
    <text evidence="1">Delta-conotoxins bind to site 6 of voltage-gated sodium channels (Nav) and inhibit the inactivation process.</text>
</comment>
<comment type="subcellular location">
    <subcellularLocation>
        <location evidence="1">Secreted</location>
    </subcellularLocation>
</comment>
<comment type="tissue specificity">
    <text>Expressed by the venom duct.</text>
</comment>
<comment type="domain">
    <text evidence="1">The presence of a 'disulfide through disulfide knot' structurally defines this protein as a knottin.</text>
</comment>
<comment type="domain">
    <text>The cysteine framework is VI/VII (C-C-CC-C-C).</text>
</comment>
<comment type="similarity">
    <text evidence="3">Belongs to the conotoxin O1 superfamily.</text>
</comment>
<dbReference type="EMBL" id="DJ379434">
    <property type="status" value="NOT_ANNOTATED_CDS"/>
    <property type="molecule type" value="Unassigned_DNA"/>
</dbReference>
<dbReference type="SMR" id="P69753"/>
<dbReference type="ConoServer" id="1624">
    <property type="toxin name" value="MVIA"/>
</dbReference>
<dbReference type="GO" id="GO:0005576">
    <property type="term" value="C:extracellular region"/>
    <property type="evidence" value="ECO:0007669"/>
    <property type="project" value="UniProtKB-SubCell"/>
</dbReference>
<dbReference type="GO" id="GO:0044231">
    <property type="term" value="C:host cell presynaptic membrane"/>
    <property type="evidence" value="ECO:0007669"/>
    <property type="project" value="UniProtKB-KW"/>
</dbReference>
<dbReference type="GO" id="GO:0019871">
    <property type="term" value="F:sodium channel inhibitor activity"/>
    <property type="evidence" value="ECO:0007669"/>
    <property type="project" value="InterPro"/>
</dbReference>
<dbReference type="GO" id="GO:0090729">
    <property type="term" value="F:toxin activity"/>
    <property type="evidence" value="ECO:0007669"/>
    <property type="project" value="UniProtKB-KW"/>
</dbReference>
<dbReference type="InterPro" id="IPR004214">
    <property type="entry name" value="Conotoxin"/>
</dbReference>
<dbReference type="InterPro" id="IPR012322">
    <property type="entry name" value="Conotoxin_d-typ_CS"/>
</dbReference>
<dbReference type="InterPro" id="IPR012321">
    <property type="entry name" value="Conotoxin_omega-typ_CS"/>
</dbReference>
<dbReference type="Pfam" id="PF02950">
    <property type="entry name" value="Conotoxin"/>
    <property type="match status" value="1"/>
</dbReference>
<dbReference type="PROSITE" id="PS60005">
    <property type="entry name" value="DELTA_CONOTOXIN"/>
    <property type="match status" value="1"/>
</dbReference>